<evidence type="ECO:0000255" key="1">
    <source>
        <dbReference type="HAMAP-Rule" id="MF_01007"/>
    </source>
</evidence>
<reference key="1">
    <citation type="journal article" date="2003" name="Nature">
        <title>Genome divergence in two Prochlorococcus ecotypes reflects oceanic niche differentiation.</title>
        <authorList>
            <person name="Rocap G."/>
            <person name="Larimer F.W."/>
            <person name="Lamerdin J.E."/>
            <person name="Malfatti S."/>
            <person name="Chain P."/>
            <person name="Ahlgren N.A."/>
            <person name="Arellano A."/>
            <person name="Coleman M."/>
            <person name="Hauser L."/>
            <person name="Hess W.R."/>
            <person name="Johnson Z.I."/>
            <person name="Land M.L."/>
            <person name="Lindell D."/>
            <person name="Post A.F."/>
            <person name="Regala W."/>
            <person name="Shah M."/>
            <person name="Shaw S.L."/>
            <person name="Steglich C."/>
            <person name="Sullivan M.B."/>
            <person name="Ting C.S."/>
            <person name="Tolonen A."/>
            <person name="Webb E.A."/>
            <person name="Zinser E.R."/>
            <person name="Chisholm S.W."/>
        </authorList>
    </citation>
    <scope>NUCLEOTIDE SEQUENCE [LARGE SCALE GENOMIC DNA]</scope>
    <source>
        <strain>CCMP1986 / NIES-2087 / MED4</strain>
    </source>
</reference>
<protein>
    <recommendedName>
        <fullName evidence="1">Ribosomal RNA small subunit methyltransferase H</fullName>
        <ecNumber evidence="1">2.1.1.199</ecNumber>
    </recommendedName>
    <alternativeName>
        <fullName evidence="1">16S rRNA m(4)C1402 methyltransferase</fullName>
    </alternativeName>
    <alternativeName>
        <fullName evidence="1">rRNA (cytosine-N(4)-)-methyltransferase RsmH</fullName>
    </alternativeName>
</protein>
<proteinExistence type="inferred from homology"/>
<organism>
    <name type="scientific">Prochlorococcus marinus subsp. pastoris (strain CCMP1986 / NIES-2087 / MED4)</name>
    <dbReference type="NCBI Taxonomy" id="59919"/>
    <lineage>
        <taxon>Bacteria</taxon>
        <taxon>Bacillati</taxon>
        <taxon>Cyanobacteriota</taxon>
        <taxon>Cyanophyceae</taxon>
        <taxon>Synechococcales</taxon>
        <taxon>Prochlorococcaceae</taxon>
        <taxon>Prochlorococcus</taxon>
    </lineage>
</organism>
<accession>Q7V3B1</accession>
<gene>
    <name evidence="1" type="primary">rsmH</name>
    <name type="synonym">mraW</name>
    <name type="ordered locus">PMM0171</name>
</gene>
<sequence length="300" mass="34224">MQTDLSDSSLFNHKSVMTDEILVSVDQYPLISDNKLTAIDATLGGGGHSYQLLKKYPDLKIIGLDHDPFARQSAFIKLEEFKSRIEICPSNFANFEPKEKVSFVIADLGVNSNQIDNPQRGFSFQKDGPLDMRMNPLLEMNAEDLIETLNEKDLADLIFKFGDERLSRKISRRIKKDLQEKGKYSGTKDLAYSIAGCFPPKQRYRKIHPATRTFQALRIAVNKEIEALERFLELAPNWLLPGGIISIISFHSIEDRLVKNSFKGDERLKNLTKKPITPNEKEIENNKRSRSAKLRIAQLK</sequence>
<dbReference type="EC" id="2.1.1.199" evidence="1"/>
<dbReference type="EMBL" id="BX548174">
    <property type="protein sequence ID" value="CAE18630.1"/>
    <property type="molecule type" value="Genomic_DNA"/>
</dbReference>
<dbReference type="RefSeq" id="WP_011131810.1">
    <property type="nucleotide sequence ID" value="NC_005072.1"/>
</dbReference>
<dbReference type="SMR" id="Q7V3B1"/>
<dbReference type="STRING" id="59919.PMM0171"/>
<dbReference type="KEGG" id="pmm:PMM0171"/>
<dbReference type="eggNOG" id="COG0275">
    <property type="taxonomic scope" value="Bacteria"/>
</dbReference>
<dbReference type="HOGENOM" id="CLU_038422_3_0_3"/>
<dbReference type="OrthoDB" id="9806637at2"/>
<dbReference type="Proteomes" id="UP000001026">
    <property type="component" value="Chromosome"/>
</dbReference>
<dbReference type="GO" id="GO:0005737">
    <property type="term" value="C:cytoplasm"/>
    <property type="evidence" value="ECO:0007669"/>
    <property type="project" value="UniProtKB-SubCell"/>
</dbReference>
<dbReference type="GO" id="GO:0071424">
    <property type="term" value="F:rRNA (cytosine-N4-)-methyltransferase activity"/>
    <property type="evidence" value="ECO:0007669"/>
    <property type="project" value="UniProtKB-UniRule"/>
</dbReference>
<dbReference type="GO" id="GO:0070475">
    <property type="term" value="P:rRNA base methylation"/>
    <property type="evidence" value="ECO:0007669"/>
    <property type="project" value="UniProtKB-UniRule"/>
</dbReference>
<dbReference type="Gene3D" id="1.10.150.170">
    <property type="entry name" value="Putative methyltransferase TM0872, insert domain"/>
    <property type="match status" value="1"/>
</dbReference>
<dbReference type="Gene3D" id="3.40.50.150">
    <property type="entry name" value="Vaccinia Virus protein VP39"/>
    <property type="match status" value="1"/>
</dbReference>
<dbReference type="HAMAP" id="MF_01007">
    <property type="entry name" value="16SrRNA_methyltr_H"/>
    <property type="match status" value="1"/>
</dbReference>
<dbReference type="InterPro" id="IPR002903">
    <property type="entry name" value="RsmH"/>
</dbReference>
<dbReference type="InterPro" id="IPR023397">
    <property type="entry name" value="SAM-dep_MeTrfase_MraW_recog"/>
</dbReference>
<dbReference type="InterPro" id="IPR029063">
    <property type="entry name" value="SAM-dependent_MTases_sf"/>
</dbReference>
<dbReference type="NCBIfam" id="TIGR00006">
    <property type="entry name" value="16S rRNA (cytosine(1402)-N(4))-methyltransferase RsmH"/>
    <property type="match status" value="1"/>
</dbReference>
<dbReference type="PANTHER" id="PTHR11265:SF0">
    <property type="entry name" value="12S RRNA N4-METHYLCYTIDINE METHYLTRANSFERASE"/>
    <property type="match status" value="1"/>
</dbReference>
<dbReference type="PANTHER" id="PTHR11265">
    <property type="entry name" value="S-ADENOSYL-METHYLTRANSFERASE MRAW"/>
    <property type="match status" value="1"/>
</dbReference>
<dbReference type="Pfam" id="PF01795">
    <property type="entry name" value="Methyltransf_5"/>
    <property type="match status" value="1"/>
</dbReference>
<dbReference type="PIRSF" id="PIRSF004486">
    <property type="entry name" value="MraW"/>
    <property type="match status" value="1"/>
</dbReference>
<dbReference type="SUPFAM" id="SSF81799">
    <property type="entry name" value="Putative methyltransferase TM0872, insert domain"/>
    <property type="match status" value="1"/>
</dbReference>
<dbReference type="SUPFAM" id="SSF53335">
    <property type="entry name" value="S-adenosyl-L-methionine-dependent methyltransferases"/>
    <property type="match status" value="1"/>
</dbReference>
<keyword id="KW-0963">Cytoplasm</keyword>
<keyword id="KW-0489">Methyltransferase</keyword>
<keyword id="KW-0698">rRNA processing</keyword>
<keyword id="KW-0949">S-adenosyl-L-methionine</keyword>
<keyword id="KW-0808">Transferase</keyword>
<comment type="function">
    <text evidence="1">Specifically methylates the N4 position of cytidine in position 1402 (C1402) of 16S rRNA.</text>
</comment>
<comment type="catalytic activity">
    <reaction evidence="1">
        <text>cytidine(1402) in 16S rRNA + S-adenosyl-L-methionine = N(4)-methylcytidine(1402) in 16S rRNA + S-adenosyl-L-homocysteine + H(+)</text>
        <dbReference type="Rhea" id="RHEA:42928"/>
        <dbReference type="Rhea" id="RHEA-COMP:10286"/>
        <dbReference type="Rhea" id="RHEA-COMP:10287"/>
        <dbReference type="ChEBI" id="CHEBI:15378"/>
        <dbReference type="ChEBI" id="CHEBI:57856"/>
        <dbReference type="ChEBI" id="CHEBI:59789"/>
        <dbReference type="ChEBI" id="CHEBI:74506"/>
        <dbReference type="ChEBI" id="CHEBI:82748"/>
        <dbReference type="EC" id="2.1.1.199"/>
    </reaction>
</comment>
<comment type="subcellular location">
    <subcellularLocation>
        <location evidence="1">Cytoplasm</location>
    </subcellularLocation>
</comment>
<comment type="similarity">
    <text evidence="1">Belongs to the methyltransferase superfamily. RsmH family.</text>
</comment>
<name>RSMH_PROMP</name>
<feature type="chain" id="PRO_0000108684" description="Ribosomal RNA small subunit methyltransferase H">
    <location>
        <begin position="1"/>
        <end position="300"/>
    </location>
</feature>
<feature type="binding site" evidence="1">
    <location>
        <begin position="46"/>
        <end position="48"/>
    </location>
    <ligand>
        <name>S-adenosyl-L-methionine</name>
        <dbReference type="ChEBI" id="CHEBI:59789"/>
    </ligand>
</feature>
<feature type="binding site" evidence="1">
    <location>
        <position position="65"/>
    </location>
    <ligand>
        <name>S-adenosyl-L-methionine</name>
        <dbReference type="ChEBI" id="CHEBI:59789"/>
    </ligand>
</feature>
<feature type="binding site" evidence="1">
    <location>
        <position position="92"/>
    </location>
    <ligand>
        <name>S-adenosyl-L-methionine</name>
        <dbReference type="ChEBI" id="CHEBI:59789"/>
    </ligand>
</feature>
<feature type="binding site" evidence="1">
    <location>
        <position position="107"/>
    </location>
    <ligand>
        <name>S-adenosyl-L-methionine</name>
        <dbReference type="ChEBI" id="CHEBI:59789"/>
    </ligand>
</feature>
<feature type="binding site" evidence="1">
    <location>
        <position position="114"/>
    </location>
    <ligand>
        <name>S-adenosyl-L-methionine</name>
        <dbReference type="ChEBI" id="CHEBI:59789"/>
    </ligand>
</feature>